<feature type="chain" id="PRO_0000462498" description="Polymerase acidic protein">
    <location>
        <begin position="1"/>
        <end position="716"/>
    </location>
</feature>
<feature type="short sequence motif" description="Nuclear localization signal 1 (NLS1)" evidence="1">
    <location>
        <begin position="124"/>
        <end position="139"/>
    </location>
</feature>
<feature type="short sequence motif" description="Nuclear localization signal 2 (NLS2)" evidence="2">
    <location>
        <begin position="184"/>
        <end position="247"/>
    </location>
</feature>
<feature type="active site" evidence="6">
    <location>
        <position position="134"/>
    </location>
</feature>
<feature type="binding site" evidence="2 7">
    <location>
        <position position="41"/>
    </location>
    <ligand>
        <name>Mn(2+)</name>
        <dbReference type="ChEBI" id="CHEBI:29035"/>
        <label>1</label>
    </ligand>
</feature>
<feature type="binding site" evidence="4 7 9">
    <location>
        <position position="80"/>
    </location>
    <ligand>
        <name>Mn(2+)</name>
        <dbReference type="ChEBI" id="CHEBI:29035"/>
        <label>1</label>
    </ligand>
</feature>
<feature type="binding site" evidence="2 4 8">
    <location>
        <position position="80"/>
    </location>
    <ligand>
        <name>Mn(2+)</name>
        <dbReference type="ChEBI" id="CHEBI:29035"/>
        <label>2</label>
    </ligand>
</feature>
<feature type="binding site" evidence="4 7 9">
    <location>
        <position position="108"/>
    </location>
    <ligand>
        <name>Mn(2+)</name>
        <dbReference type="ChEBI" id="CHEBI:29035"/>
        <label>1</label>
    </ligand>
</feature>
<feature type="binding site" evidence="2 4 8">
    <location>
        <position position="108"/>
    </location>
    <ligand>
        <name>Mn(2+)</name>
        <dbReference type="ChEBI" id="CHEBI:29035"/>
        <label>2</label>
    </ligand>
</feature>
<feature type="binding site" evidence="2 4 7">
    <location>
        <position position="119"/>
    </location>
    <ligand>
        <name>Mn(2+)</name>
        <dbReference type="ChEBI" id="CHEBI:29035"/>
        <label>1</label>
    </ligand>
</feature>
<feature type="binding site" evidence="2 4 7 9">
    <location>
        <position position="120"/>
    </location>
    <ligand>
        <name>Mn(2+)</name>
        <dbReference type="ChEBI" id="CHEBI:29035"/>
        <label>1</label>
    </ligand>
</feature>
<feature type="sequence conflict" description="In Ref. 2; ADD97094." evidence="5" ref="2">
    <original>E</original>
    <variation>K</variation>
    <location>
        <position position="142"/>
    </location>
</feature>
<feature type="sequence conflict" description="In Ref. 3; ABO37475." evidence="5" ref="3">
    <original>E</original>
    <variation>A</variation>
    <location>
        <position position="327"/>
    </location>
</feature>
<evidence type="ECO:0000250" key="1">
    <source>
        <dbReference type="UniProtKB" id="P03433"/>
    </source>
</evidence>
<evidence type="ECO:0000255" key="2">
    <source>
        <dbReference type="HAMAP-Rule" id="MF_04063"/>
    </source>
</evidence>
<evidence type="ECO:0000255" key="3">
    <source>
        <dbReference type="RuleBase" id="RU361280"/>
    </source>
</evidence>
<evidence type="ECO:0000269" key="4">
    <source>
    </source>
</evidence>
<evidence type="ECO:0000305" key="5"/>
<evidence type="ECO:0000305" key="6">
    <source>
    </source>
</evidence>
<evidence type="ECO:0007744" key="7">
    <source>
        <dbReference type="PDB" id="4E5E"/>
    </source>
</evidence>
<evidence type="ECO:0007744" key="8">
    <source>
        <dbReference type="PDB" id="4E5F"/>
    </source>
</evidence>
<evidence type="ECO:0007744" key="9">
    <source>
        <dbReference type="PDB" id="4E5G"/>
    </source>
</evidence>
<evidence type="ECO:0007744" key="10">
    <source>
        <dbReference type="PDB" id="4E5H"/>
    </source>
</evidence>
<evidence type="ECO:0007744" key="11">
    <source>
        <dbReference type="PDB" id="4E5I"/>
    </source>
</evidence>
<evidence type="ECO:0007744" key="12">
    <source>
        <dbReference type="PDB" id="4E5J"/>
    </source>
</evidence>
<evidence type="ECO:0007744" key="13">
    <source>
        <dbReference type="PDB" id="4E5L"/>
    </source>
</evidence>
<comment type="function">
    <text evidence="2 4">Plays an essential role in viral RNA transcription and replication by forming the heterotrimeric polymerase complex together with PB1 and PB2 subunits. The complex transcribes viral mRNAs by using a unique mechanism called cap-snatching. It consists in the hijacking and cleavage of host capped pre-mRNAs. These short capped RNAs are then used as primers for viral mRNAs. The PB2 subunit is responsible for the binding of the 5' cap of cellular pre-mRNAs which are subsequently cleaved after 10-13 nucleotides by the PA subunit that carries the endonuclease activity.</text>
</comment>
<comment type="cofactor">
    <cofactor evidence="2 4">
        <name>Mn(2+)</name>
        <dbReference type="ChEBI" id="CHEBI:29035"/>
    </cofactor>
    <text evidence="2 4">Binds 2 manganese ions per subunit.</text>
</comment>
<comment type="activity regulation">
    <text evidence="4">Endonuclease activity is inhibited by 2,4-dioxo-4-phenylbutanoic acid (DPBA), L-742,001 and 2-hydroxyisoquinoline-1,3(2H,4H)-dione.</text>
</comment>
<comment type="subunit">
    <text evidence="2">Influenza RNA polymerase is composed of three subunits: PB1, PB2 and PA. Interacts (via C-terminus) with PB1 (via N-terminus).</text>
</comment>
<comment type="interaction">
    <interactant intactId="EBI-25772799">
        <id>Q5EP34</id>
    </interactant>
    <interactant intactId="EBI-356440">
        <id>O95831</id>
        <label>AIFM1</label>
    </interactant>
    <organismsDiffer>true</organismsDiffer>
    <experiments>8</experiments>
</comment>
<comment type="interaction">
    <interactant intactId="EBI-25772799">
        <id>Q5EP34</id>
    </interactant>
    <interactant intactId="EBI-710464">
        <id>O00267</id>
        <label>SUPT5H</label>
    </interactant>
    <organismsDiffer>true</organismsDiffer>
    <experiments>3</experiments>
</comment>
<comment type="subcellular location">
    <subcellularLocation>
        <location evidence="2">Host cytoplasm</location>
    </subcellularLocation>
    <subcellularLocation>
        <location evidence="2">Host nucleus</location>
    </subcellularLocation>
    <text evidence="2">PB1 and PA are transported in the host nucleus as a complex.</text>
</comment>
<comment type="alternative products">
    <event type="ribosomal frameshifting"/>
    <isoform>
        <id>Q5EP34-1</id>
        <name>PA</name>
        <sequence type="displayed"/>
    </isoform>
    <isoform>
        <id>P0DXO4-1</id>
        <name>PA-X</name>
        <sequence type="external"/>
    </isoform>
</comment>
<comment type="PTM">
    <text evidence="2">Phosphorylated on serines and threonines by host kinases, including human casein kinase II.</text>
</comment>
<comment type="similarity">
    <text evidence="2">Belongs to the influenza viruses PA family.</text>
</comment>
<protein>
    <recommendedName>
        <fullName evidence="2 3">Polymerase acidic protein</fullName>
        <ecNumber evidence="2 4">3.1.-.-</ecNumber>
    </recommendedName>
    <alternativeName>
        <fullName evidence="2">RNA-directed RNA polymerase subunit P2</fullName>
    </alternativeName>
</protein>
<sequence length="716" mass="82485">MEDFVRQCFNPMIVELAEKAMKEYGEDPKIETNKFAAICTHLEVCFMYSDFHFIDERSESIIVESGDPNALLKHRFEIIEGRDRTMAWTVVNSICNTTGVEKPKFLPDLYDYKENRFIEIGVTRREVHTYYLEKANKIKSEETHIHIFSFTGEEMATKADYTLDEESRARIKTRLFTIRQEMASRGLWDSFRQSERGEETIEEKFEITGTMRRLADQSLPPNFSSLENFRAYVDGFEPNGCIEGKLSQMSKEVNARIEPFLKTTPRPLRLPDGPPCSQRSKFLLMDALKLSIEDPSHEGEGIPLYDAIKCMKTFFGWKEPNIVKPHEKGINPNYLLAWKQVLAELQDIENEEKIPKTKNMKKTSQLKWALGENMAPEKVDFEDCKDVSDLRQYDSDEPESRSLASWIQSEFNKACELTDSIWIELDEIGEDVAPIEHIASMRRNYFTAEVSHCRATEYIMKGVYINTALLNASCAAMDDFQLIPMISKCRTKEGRRKTNLYGFIIKGRSHLRNDTDVVNFVSMEFSLTDPRLEPHKWEKYCVLEIGDMLLRTAVGQVSRPMFLYVRTNGTSKIKMKWGMEMRRCLLQSLQQIESMIEAESSVKEKDMTKEFFENKSETWPIGESPKGVEEGSIGKVCRTLLAKSVFNSLYASPQLEGFSAESRKLLLIAQALRDNLEPGTFDLGGLYEAIEECLINDPWVLLNASWFNSFLAHALK</sequence>
<name>PA_I04A1</name>
<keyword id="KW-0002">3D-structure</keyword>
<keyword id="KW-1157">Cap snatching</keyword>
<keyword id="KW-0255">Endonuclease</keyword>
<keyword id="KW-1262">Eukaryotic host gene expression shutoff by virus</keyword>
<keyword id="KW-1191">Eukaryotic host transcription shutoff by virus</keyword>
<keyword id="KW-1035">Host cytoplasm</keyword>
<keyword id="KW-1190">Host gene expression shutoff by virus</keyword>
<keyword id="KW-1048">Host nucleus</keyword>
<keyword id="KW-0945">Host-virus interaction</keyword>
<keyword id="KW-0378">Hydrolase</keyword>
<keyword id="KW-1104">Inhibition of host RNA polymerase II by virus</keyword>
<keyword id="KW-0464">Manganese</keyword>
<keyword id="KW-0479">Metal-binding</keyword>
<keyword id="KW-0540">Nuclease</keyword>
<keyword id="KW-0597">Phosphoprotein</keyword>
<keyword id="KW-0688">Ribosomal frameshifting</keyword>
<accession>Q5EP34</accession>
<accession>A4GY60</accession>
<accession>H9L9D7</accession>
<accession>Q6DNZ1</accession>
<reference key="1">
    <citation type="journal article" date="2005" name="J. Virol.">
        <title>Lethality to ferrets of H5N1 influenza viruses isolated from humans and poultry in 2004.</title>
        <authorList>
            <person name="Govorkova E.A."/>
            <person name="Rehg J.E."/>
            <person name="Krauss S."/>
            <person name="Yen H.L."/>
            <person name="Guan Y."/>
            <person name="Peiris M."/>
            <person name="Nguyen T.D."/>
            <person name="Hanh T.H."/>
            <person name="Puthavathana P."/>
            <person name="Long H.T."/>
            <person name="Buranathai C."/>
            <person name="Lim W."/>
            <person name="Webster R.G."/>
            <person name="Hoffmann E."/>
        </authorList>
    </citation>
    <scope>NUCLEOTIDE SEQUENCE [GENOMIC DNA]</scope>
    <source>
        <strain>A/Vietnam/1203/2004</strain>
    </source>
</reference>
<reference key="2">
    <citation type="submission" date="2010-03" db="EMBL/GenBank/DDBJ databases">
        <title>Acquisition of virulence mutations in avian H5N1 influenza virus during a single passage in ferrets.</title>
        <authorList>
            <person name="Butler J."/>
            <person name="Middleton D."/>
            <person name="Klippel J."/>
            <person name="Rockman S."/>
            <person name="Brown L."/>
            <person name="Sapats S."/>
        </authorList>
    </citation>
    <scope>NUCLEOTIDE SEQUENCE [GENOMIC DNA]</scope>
    <source>
        <strain>A/Vietnam/1203/2004</strain>
    </source>
</reference>
<reference key="3">
    <citation type="journal article" date="2005" name="Emerg. Infect. Dis.">
        <title>Evolution of H5N1 avian influenza viruses in Asia.</title>
        <authorList>
            <consortium name="World Health Organization Global Influenza Program Surveillance Network"/>
        </authorList>
    </citation>
    <scope>NUCLEOTIDE SEQUENCE [GENOMIC DNA] OF 1-714</scope>
</reference>
<reference key="4">
    <citation type="journal article" date="2004" name="Nature">
        <title>Genesis of a highly pathogenic and potentially pandemic H5N1 influenza virus in eastern Asia.</title>
        <authorList>
            <person name="Li K.S."/>
            <person name="Guan Y."/>
            <person name="Wang J."/>
            <person name="Smith G.J.D."/>
            <person name="Xu K.M."/>
            <person name="Duan L."/>
            <person name="Rahardjo A.P."/>
            <person name="Puthavathana P."/>
            <person name="Buranathai C."/>
            <person name="Nguyen T.D."/>
            <person name="Estoepangestie A.T.S."/>
            <person name="Chaisingh A."/>
            <person name="Auewarakul P."/>
            <person name="Long H.T."/>
            <person name="Hanh N.T.H."/>
            <person name="Webby R.J."/>
            <person name="Poon L.L.M."/>
            <person name="Chen H."/>
            <person name="Shortridge K.F."/>
            <person name="Yuen K.Y."/>
            <person name="Webster R.G."/>
            <person name="Peiris J.S.M."/>
        </authorList>
    </citation>
    <scope>NUCLEOTIDE SEQUENCE [GENOMIC DNA] OF 4-716</scope>
    <source>
        <strain>A/Vietnam/1203/2004</strain>
    </source>
</reference>
<reference evidence="7 8 9 10 11 12 13" key="5">
    <citation type="journal article" date="2012" name="PLoS Pathog.">
        <title>Structural and biochemical basis for development of influenza virus inhibitors targeting the PA endonuclease.</title>
        <authorList>
            <person name="DuBois R.M."/>
            <person name="Slavish P.J."/>
            <person name="Baughman B.M."/>
            <person name="Yun M.K."/>
            <person name="Bao J."/>
            <person name="Webby R.J."/>
            <person name="Webb T.R."/>
            <person name="White S.W."/>
        </authorList>
    </citation>
    <scope>X-RAY CRYSTALLOGRAPHY (2.05 ANGSTROMS) OF 1-50 AND 73-196 IN COMPLEX WITH MANGANESE AND INHIBITORS</scope>
    <scope>CATALYTIC ACTIVITY</scope>
    <scope>COFACTOR</scope>
    <scope>FUNCTION</scope>
    <scope>ACTIVITY REGULATION</scope>
    <scope>ACTIVE SITE</scope>
    <source>
        <strain>A/Vietnam/1203/2004</strain>
    </source>
</reference>
<organismHost>
    <name type="scientific">Aves</name>
    <dbReference type="NCBI Taxonomy" id="8782"/>
</organismHost>
<organismHost>
    <name type="scientific">Homo sapiens</name>
    <name type="common">Human</name>
    <dbReference type="NCBI Taxonomy" id="9606"/>
</organismHost>
<organismHost>
    <name type="scientific">Mustela putorius furo</name>
    <name type="common">European domestic ferret</name>
    <name type="synonym">Mustela furo</name>
    <dbReference type="NCBI Taxonomy" id="9669"/>
</organismHost>
<gene>
    <name evidence="2 3" type="primary">PA</name>
</gene>
<dbReference type="EC" id="3.1.-.-" evidence="2 4"/>
<dbReference type="EMBL" id="HM006758">
    <property type="protein sequence ID" value="ADD97094.1"/>
    <property type="molecule type" value="Viral_cRNA"/>
</dbReference>
<dbReference type="EMBL" id="EF473502">
    <property type="protein sequence ID" value="ABO37475.1"/>
    <property type="molecule type" value="Viral_cRNA"/>
</dbReference>
<dbReference type="EMBL" id="AY651611">
    <property type="protein sequence ID" value="AAT74487.1"/>
    <property type="molecule type" value="Viral_cRNA"/>
</dbReference>
<dbReference type="EMBL" id="AY818132">
    <property type="protein sequence ID" value="AAW80714.1"/>
    <property type="molecule type" value="Genomic_RNA"/>
</dbReference>
<dbReference type="PDB" id="4E5E">
    <property type="method" value="X-ray"/>
    <property type="resolution" value="2.05 A"/>
    <property type="chains" value="A/B/C/D=1-50, A/B/C/D=73-196"/>
</dbReference>
<dbReference type="PDB" id="4E5F">
    <property type="method" value="X-ray"/>
    <property type="resolution" value="2.39 A"/>
    <property type="chains" value="A/B/C/D=1-50, A/B/C/D=73-196"/>
</dbReference>
<dbReference type="PDB" id="4E5G">
    <property type="method" value="X-ray"/>
    <property type="resolution" value="2.65 A"/>
    <property type="chains" value="A/B/C/D=1-50, A/B/C/D=73-196"/>
</dbReference>
<dbReference type="PDB" id="4E5H">
    <property type="method" value="X-ray"/>
    <property type="resolution" value="2.16 A"/>
    <property type="chains" value="A/B/C/D=1-50, A/B/C/D=73-196"/>
</dbReference>
<dbReference type="PDB" id="4E5I">
    <property type="method" value="X-ray"/>
    <property type="resolution" value="2.94 A"/>
    <property type="chains" value="A/B/C/D=1-50, A/B/C/D=73-196"/>
</dbReference>
<dbReference type="PDB" id="4E5J">
    <property type="method" value="X-ray"/>
    <property type="resolution" value="2.35 A"/>
    <property type="chains" value="A/B/C/D=1-50, A/B/C/D=73-196"/>
</dbReference>
<dbReference type="PDB" id="4E5L">
    <property type="method" value="X-ray"/>
    <property type="resolution" value="2.47 A"/>
    <property type="chains" value="A/B/C/D=1-50, A/B/C/D=73-196"/>
</dbReference>
<dbReference type="PDBsum" id="4E5E"/>
<dbReference type="PDBsum" id="4E5F"/>
<dbReference type="PDBsum" id="4E5G"/>
<dbReference type="PDBsum" id="4E5H"/>
<dbReference type="PDBsum" id="4E5I"/>
<dbReference type="PDBsum" id="4E5J"/>
<dbReference type="PDBsum" id="4E5L"/>
<dbReference type="SMR" id="Q5EP34"/>
<dbReference type="IntAct" id="Q5EP34">
    <property type="interactions" value="313"/>
</dbReference>
<dbReference type="MINT" id="Q5EP34"/>
<dbReference type="MEROPS" id="S62.001"/>
<dbReference type="EvolutionaryTrace" id="Q5EP34"/>
<dbReference type="Proteomes" id="UP000102152">
    <property type="component" value="Genome"/>
</dbReference>
<dbReference type="Proteomes" id="UP000206660">
    <property type="component" value="Genome"/>
</dbReference>
<dbReference type="Proteomes" id="UP000206680">
    <property type="component" value="Genome"/>
</dbReference>
<dbReference type="Proteomes" id="UP000206700">
    <property type="component" value="Genome"/>
</dbReference>
<dbReference type="GO" id="GO:0030430">
    <property type="term" value="C:host cell cytoplasm"/>
    <property type="evidence" value="ECO:0007669"/>
    <property type="project" value="UniProtKB-SubCell"/>
</dbReference>
<dbReference type="GO" id="GO:0042025">
    <property type="term" value="C:host cell nucleus"/>
    <property type="evidence" value="ECO:0007669"/>
    <property type="project" value="UniProtKB-SubCell"/>
</dbReference>
<dbReference type="GO" id="GO:0004519">
    <property type="term" value="F:endonuclease activity"/>
    <property type="evidence" value="ECO:0007669"/>
    <property type="project" value="UniProtKB-KW"/>
</dbReference>
<dbReference type="GO" id="GO:0046872">
    <property type="term" value="F:metal ion binding"/>
    <property type="evidence" value="ECO:0007669"/>
    <property type="project" value="UniProtKB-KW"/>
</dbReference>
<dbReference type="GO" id="GO:0003723">
    <property type="term" value="F:RNA binding"/>
    <property type="evidence" value="ECO:0007669"/>
    <property type="project" value="UniProtKB-UniRule"/>
</dbReference>
<dbReference type="GO" id="GO:0075526">
    <property type="term" value="P:cap snatching"/>
    <property type="evidence" value="ECO:0007669"/>
    <property type="project" value="UniProtKB-UniRule"/>
</dbReference>
<dbReference type="GO" id="GO:0006351">
    <property type="term" value="P:DNA-templated transcription"/>
    <property type="evidence" value="ECO:0007669"/>
    <property type="project" value="UniProtKB-UniRule"/>
</dbReference>
<dbReference type="GO" id="GO:0039657">
    <property type="term" value="P:symbiont-mediated suppression of host gene expression"/>
    <property type="evidence" value="ECO:0007669"/>
    <property type="project" value="UniProtKB-KW"/>
</dbReference>
<dbReference type="GO" id="GO:0039523">
    <property type="term" value="P:symbiont-mediated suppression of host mRNA transcription via inhibition of RNA polymerase II activity"/>
    <property type="evidence" value="ECO:0007669"/>
    <property type="project" value="UniProtKB-UniRule"/>
</dbReference>
<dbReference type="GO" id="GO:0039694">
    <property type="term" value="P:viral RNA genome replication"/>
    <property type="evidence" value="ECO:0007669"/>
    <property type="project" value="InterPro"/>
</dbReference>
<dbReference type="GO" id="GO:0075523">
    <property type="term" value="P:viral translational frameshifting"/>
    <property type="evidence" value="ECO:0007669"/>
    <property type="project" value="UniProtKB-KW"/>
</dbReference>
<dbReference type="FunFam" id="3.40.91.90:FF:000001">
    <property type="entry name" value="Polymerase acidic protein"/>
    <property type="match status" value="1"/>
</dbReference>
<dbReference type="Gene3D" id="3.40.91.90">
    <property type="entry name" value="Influenza RNA-dependent RNA polymerase subunit PA, endonuclease domain"/>
    <property type="match status" value="1"/>
</dbReference>
<dbReference type="HAMAP" id="MF_04063">
    <property type="entry name" value="INFV_PA"/>
    <property type="match status" value="1"/>
</dbReference>
<dbReference type="InterPro" id="IPR037534">
    <property type="entry name" value="INFV_PA"/>
</dbReference>
<dbReference type="InterPro" id="IPR001009">
    <property type="entry name" value="PA/PA-X"/>
</dbReference>
<dbReference type="InterPro" id="IPR038372">
    <property type="entry name" value="PA/PA-X_sf"/>
</dbReference>
<dbReference type="Pfam" id="PF00603">
    <property type="entry name" value="Flu_PA"/>
    <property type="match status" value="1"/>
</dbReference>
<proteinExistence type="evidence at protein level"/>
<organism>
    <name type="scientific">Influenza A virus (strain A/Vietnam/1203/2004 H5N1)</name>
    <dbReference type="NCBI Taxonomy" id="284218"/>
    <lineage>
        <taxon>Viruses</taxon>
        <taxon>Riboviria</taxon>
        <taxon>Orthornavirae</taxon>
        <taxon>Negarnaviricota</taxon>
        <taxon>Polyploviricotina</taxon>
        <taxon>Insthoviricetes</taxon>
        <taxon>Articulavirales</taxon>
        <taxon>Orthomyxoviridae</taxon>
        <taxon>Alphainfluenzavirus</taxon>
        <taxon>Alphainfluenzavirus influenzae</taxon>
        <taxon>Influenza A virus</taxon>
    </lineage>
</organism>